<dbReference type="EMBL" id="AY386897">
    <property type="protein sequence ID" value="AAQ91975.1"/>
    <property type="molecule type" value="Genomic_DNA"/>
</dbReference>
<dbReference type="EMBL" id="EU835853">
    <property type="protein sequence ID" value="ACH41053.1"/>
    <property type="molecule type" value="Genomic_DNA"/>
</dbReference>
<dbReference type="RefSeq" id="YP_002149716.1">
    <property type="nucleotide sequence ID" value="NC_011163.1"/>
</dbReference>
<dbReference type="GeneID" id="6797472"/>
<dbReference type="KEGG" id="cam:6797472"/>
<dbReference type="OrthoDB" id="1886907at2759"/>
<dbReference type="Proteomes" id="UP000087171">
    <property type="component" value="Chloroplast Pltd"/>
</dbReference>
<dbReference type="GO" id="GO:0009507">
    <property type="term" value="C:chloroplast"/>
    <property type="evidence" value="ECO:0007669"/>
    <property type="project" value="UniProtKB-SubCell"/>
</dbReference>
<dbReference type="GO" id="GO:0003723">
    <property type="term" value="F:RNA binding"/>
    <property type="evidence" value="ECO:0007669"/>
    <property type="project" value="UniProtKB-KW"/>
</dbReference>
<dbReference type="GO" id="GO:0006397">
    <property type="term" value="P:mRNA processing"/>
    <property type="evidence" value="ECO:0007669"/>
    <property type="project" value="UniProtKB-KW"/>
</dbReference>
<dbReference type="GO" id="GO:0008380">
    <property type="term" value="P:RNA splicing"/>
    <property type="evidence" value="ECO:0007669"/>
    <property type="project" value="UniProtKB-UniRule"/>
</dbReference>
<dbReference type="GO" id="GO:0008033">
    <property type="term" value="P:tRNA processing"/>
    <property type="evidence" value="ECO:0007669"/>
    <property type="project" value="UniProtKB-KW"/>
</dbReference>
<dbReference type="HAMAP" id="MF_01390">
    <property type="entry name" value="MatK"/>
    <property type="match status" value="1"/>
</dbReference>
<dbReference type="InterPro" id="IPR024937">
    <property type="entry name" value="Domain_X"/>
</dbReference>
<dbReference type="InterPro" id="IPR002866">
    <property type="entry name" value="Maturase_MatK"/>
</dbReference>
<dbReference type="InterPro" id="IPR024942">
    <property type="entry name" value="Maturase_MatK_N"/>
</dbReference>
<dbReference type="PANTHER" id="PTHR34811">
    <property type="entry name" value="MATURASE K"/>
    <property type="match status" value="1"/>
</dbReference>
<dbReference type="PANTHER" id="PTHR34811:SF1">
    <property type="entry name" value="MATURASE K"/>
    <property type="match status" value="1"/>
</dbReference>
<dbReference type="Pfam" id="PF01348">
    <property type="entry name" value="Intron_maturas2"/>
    <property type="match status" value="1"/>
</dbReference>
<dbReference type="Pfam" id="PF01824">
    <property type="entry name" value="MatK_N"/>
    <property type="match status" value="1"/>
</dbReference>
<gene>
    <name evidence="1" type="primary">matK</name>
</gene>
<geneLocation type="chloroplast"/>
<organism>
    <name type="scientific">Cicer arietinum</name>
    <name type="common">Chickpea</name>
    <name type="synonym">Garbanzo</name>
    <dbReference type="NCBI Taxonomy" id="3827"/>
    <lineage>
        <taxon>Eukaryota</taxon>
        <taxon>Viridiplantae</taxon>
        <taxon>Streptophyta</taxon>
        <taxon>Embryophyta</taxon>
        <taxon>Tracheophyta</taxon>
        <taxon>Spermatophyta</taxon>
        <taxon>Magnoliopsida</taxon>
        <taxon>eudicotyledons</taxon>
        <taxon>Gunneridae</taxon>
        <taxon>Pentapetalae</taxon>
        <taxon>rosids</taxon>
        <taxon>fabids</taxon>
        <taxon>Fabales</taxon>
        <taxon>Fabaceae</taxon>
        <taxon>Papilionoideae</taxon>
        <taxon>50 kb inversion clade</taxon>
        <taxon>NPAAA clade</taxon>
        <taxon>Hologalegina</taxon>
        <taxon>IRL clade</taxon>
        <taxon>Cicereae</taxon>
        <taxon>Cicer</taxon>
    </lineage>
</organism>
<sequence length="509" mass="61200">MKEYQVYLERARSRQQDFLYPLIFREYIYGLAYSQNFKRSSFVENLGYDSKYSLLIVKRLISRMYQQNHLIISANDSNKNPFWGYNKNFNSQIISEGFAIVVEIPFFLQSGSSLKESEIIKSYKNLRSIHSVFPFLEDKFTYLNYVSDIRIPYPIHLEILVQILRYWVKDAPFFHLLRLFVYNFCNWNSFITTKKSIYTFSKSNPRLFLFLYNFYVWEYESIFLFLRNKSSHLRLKSFSVFFERIFFYAKREHLVEVFAKDFPYTLKFFKDPLIHYVRYQGKSILASRNAPILMNKWKHYFLHLWQCFFDVWSQPGTIKINQLSQHSFQLLGYFSNVRLNRSVVRSHMLQNTFLIEIVRKKLDIIVPIIPLIRSLAKGKFCNVLGHPISKPVWADSSDLDIIDRFLRICRNLSHYYNGSSKKKSLYQIKYILRLSCIKTLACKHKSTVRAFLKRSGSEELLEEFFTEEEEILSFIFPRDSSTLQRLHRNRINRIWYLDILFSNDLVNHE</sequence>
<proteinExistence type="inferred from homology"/>
<comment type="function">
    <text evidence="1">Usually encoded in the trnK tRNA gene intron. Probably assists in splicing its own and other chloroplast group II introns.</text>
</comment>
<comment type="subcellular location">
    <subcellularLocation>
        <location>Plastid</location>
        <location>Chloroplast</location>
    </subcellularLocation>
</comment>
<comment type="similarity">
    <text evidence="1">Belongs to the intron maturase 2 family. MatK subfamily.</text>
</comment>
<keyword id="KW-0150">Chloroplast</keyword>
<keyword id="KW-0507">mRNA processing</keyword>
<keyword id="KW-0934">Plastid</keyword>
<keyword id="KW-1185">Reference proteome</keyword>
<keyword id="KW-0694">RNA-binding</keyword>
<keyword id="KW-0819">tRNA processing</keyword>
<feature type="chain" id="PRO_0000143333" description="Maturase K">
    <location>
        <begin position="1"/>
        <end position="509"/>
    </location>
</feature>
<evidence type="ECO:0000255" key="1">
    <source>
        <dbReference type="HAMAP-Rule" id="MF_01390"/>
    </source>
</evidence>
<accession>Q5YK05</accession>
<accession>B5LMK7</accession>
<protein>
    <recommendedName>
        <fullName evidence="1">Maturase K</fullName>
    </recommendedName>
    <alternativeName>
        <fullName evidence="1">Intron maturase</fullName>
    </alternativeName>
</protein>
<reference key="1">
    <citation type="journal article" date="2004" name="Am. J. Bot.">
        <title>A phylogeny of legumes (Leguminosae) based on analysis of the plastid matK gene resolves many well-supported subclades within the family.</title>
        <authorList>
            <person name="Wojciechowski M.F."/>
            <person name="Lavin M."/>
            <person name="Sanderson M.J."/>
        </authorList>
        <dbReference type="AGRICOLA" id="IND43661289"/>
    </citation>
    <scope>NUCLEOTIDE SEQUENCE [GENOMIC DNA]</scope>
</reference>
<reference key="2">
    <citation type="journal article" date="2008" name="Mol. Phylogenet. Evol.">
        <title>Complete plastid genome sequence of the chickpea (Cicer arietinum) and the phylogenetic distribution of rps12 and clpP intron losses among legumes (Leguminosae).</title>
        <authorList>
            <person name="Jansen R.K."/>
            <person name="Wojciechowski M.F."/>
            <person name="Sanniyasi E."/>
            <person name="Lee S.-B."/>
            <person name="Daniell H."/>
        </authorList>
    </citation>
    <scope>NUCLEOTIDE SEQUENCE [LARGE SCALE GENOMIC DNA]</scope>
</reference>
<name>MATK_CICAR</name>